<organism>
    <name type="scientific">Escherichia coli</name>
    <dbReference type="NCBI Taxonomy" id="562"/>
    <lineage>
        <taxon>Bacteria</taxon>
        <taxon>Pseudomonadati</taxon>
        <taxon>Pseudomonadota</taxon>
        <taxon>Gammaproteobacteria</taxon>
        <taxon>Enterobacterales</taxon>
        <taxon>Enterobacteriaceae</taxon>
        <taxon>Escherichia</taxon>
    </lineage>
</organism>
<keyword id="KW-0281">Fimbrium</keyword>
<keyword id="KW-0614">Plasmid</keyword>
<keyword id="KW-0732">Signal</keyword>
<evidence type="ECO:0000250" key="1"/>
<evidence type="ECO:0000305" key="2"/>
<name>CSOA2_ECOLX</name>
<protein>
    <recommendedName>
        <fullName>CS1 fimbrial subunit A</fullName>
    </recommendedName>
    <alternativeName>
        <fullName>CS1 pilin</fullName>
    </alternativeName>
</protein>
<sequence>MKLKKTIGAMALATLFATMGASAVEKTISVTASVDPTVDLLQSDGSALPNSVALTYSPAVNNFEAHTINTVVHTNDSDKGVVVKLSADPVLSNVLNPTLQIPVSVNFAGKPLSTTGITIDSNDLNFASSGVNKVSSTQKLSIHADATRVTGGALTAGQYQGLVSIILTKST</sequence>
<dbReference type="EMBL" id="M58550">
    <property type="protein sequence ID" value="AAA23596.1"/>
    <property type="molecule type" value="Genomic_DNA"/>
</dbReference>
<dbReference type="PIR" id="A41467">
    <property type="entry name" value="A41467"/>
</dbReference>
<dbReference type="RefSeq" id="WP_000768757.1">
    <property type="nucleotide sequence ID" value="NZ_LRLU01000168.1"/>
</dbReference>
<dbReference type="RefSeq" id="YP_424820.1">
    <property type="nucleotide sequence ID" value="NC_007635.1"/>
</dbReference>
<dbReference type="SMR" id="P0ABW8"/>
<dbReference type="GO" id="GO:0009289">
    <property type="term" value="C:pilus"/>
    <property type="evidence" value="ECO:0007669"/>
    <property type="project" value="UniProtKB-SubCell"/>
</dbReference>
<dbReference type="Gene3D" id="2.60.40.2040">
    <property type="entry name" value="CFA/I fimbrial subunit E, pilin domain"/>
    <property type="match status" value="1"/>
</dbReference>
<dbReference type="InterPro" id="IPR007540">
    <property type="entry name" value="Fimbrial_CS1-type"/>
</dbReference>
<dbReference type="Pfam" id="PF04449">
    <property type="entry name" value="Fimbrial_CS1"/>
    <property type="match status" value="1"/>
</dbReference>
<accession>P0ABW8</accession>
<accession>P25730</accession>
<feature type="signal peptide" evidence="1">
    <location>
        <begin position="1"/>
        <end position="23"/>
    </location>
</feature>
<feature type="chain" id="PRO_0000042686" description="CS1 fimbrial subunit A">
    <location>
        <begin position="24"/>
        <end position="171"/>
    </location>
</feature>
<reference key="1">
    <citation type="journal article" date="1990" name="Infect. Immun.">
        <title>Gene encoding the major subunit of CS1 pili of human enterotoxigenic Escherichia coli.</title>
        <authorList>
            <person name="Perez-Casal J."/>
            <person name="Swartley J.S."/>
            <person name="Scott J.R."/>
        </authorList>
    </citation>
    <scope>NUCLEOTIDE SEQUENCE [GENOMIC DNA]</scope>
    <source>
        <strain>O6:H16 / ETEC</strain>
    </source>
</reference>
<gene>
    <name type="primary">csoA</name>
    <name type="synonym">cooA</name>
</gene>
<comment type="function">
    <text>Fimbriae (also called pili), polar filaments radiating from the surface of the bacterium to a length of 0.5-1.5 micrometers and numbering 100-300 per cell, enable bacteria to colonize the epithelium of specific host organs.</text>
</comment>
<comment type="subcellular location">
    <subcellularLocation>
        <location>Fimbrium</location>
    </subcellularLocation>
</comment>
<comment type="induction">
    <text>CS1 fimbriae are only expressed in the presence of the positive regulator rns.</text>
</comment>
<comment type="similarity">
    <text evidence="2">Belongs to the fimbrial CS1 protein family.</text>
</comment>
<geneLocation type="plasmid">
    <name>pEU605</name>
</geneLocation>
<proteinExistence type="evidence at transcript level"/>